<protein>
    <recommendedName>
        <fullName evidence="4">Kinesin-like protein KIN-10C</fullName>
    </recommendedName>
</protein>
<keyword id="KW-0067">ATP-binding</keyword>
<keyword id="KW-0493">Microtubule</keyword>
<keyword id="KW-0505">Motor protein</keyword>
<keyword id="KW-0547">Nucleotide-binding</keyword>
<keyword id="KW-1185">Reference proteome</keyword>
<sequence length="584" mass="64124">MATAAATQSQPVRVVLRVRPHLPSEANSAEAPCVGLLGSHPGGEVTVQLKDQYTSRNECYKLDAFFGQESRVCEIFDQEVSAVIPGIFEGTNATVFAYGATGSGKTYTMQGTEDLPGLIPLAVSTVLALCTGTWCSVEISYYEVYMERCYDLLEPKAREIMVLDDKDGNLQLKGLAWVPVRSLEEFHEIYSIGVQRRKVAHTGLNDVSSRSHAVLSIRITTDVVKGKLNLIDLAGNEDNRRTCNEGIRLQESAKINQSLFALSNVISALNKKEPRIPYRESKLTRILQDSLGGNSHAVMIACLNPVEYQEAVHTVSLAARSRHVTNHMSSASKQETPKDKVDMEAKLRAWLESKGKTKSIQRMDGLLSPNAIKTPLSMSHKKQSASGRVSGRGKAMDQDGGKIKKVLFDSAARIPAENFHREGTQDIVNTTKKVVLPSLTPCKEDKTGSSLRKALSPISSNMDPQKQRTADDSNCLMLLELRTPMGSCNIVGKVTGATPLDKFIALGSNLKESLIQQYLDFLNVANKEELQKLKGIGERRAEYILELREDSPRPFKSLSDLGNIGLSSKQIQDILCKTATGIFK</sequence>
<organism>
    <name type="scientific">Oryza sativa subsp. japonica</name>
    <name type="common">Rice</name>
    <dbReference type="NCBI Taxonomy" id="39947"/>
    <lineage>
        <taxon>Eukaryota</taxon>
        <taxon>Viridiplantae</taxon>
        <taxon>Streptophyta</taxon>
        <taxon>Embryophyta</taxon>
        <taxon>Tracheophyta</taxon>
        <taxon>Spermatophyta</taxon>
        <taxon>Magnoliopsida</taxon>
        <taxon>Liliopsida</taxon>
        <taxon>Poales</taxon>
        <taxon>Poaceae</taxon>
        <taxon>BOP clade</taxon>
        <taxon>Oryzoideae</taxon>
        <taxon>Oryzeae</taxon>
        <taxon>Oryzinae</taxon>
        <taxon>Oryza</taxon>
        <taxon>Oryza sativa</taxon>
    </lineage>
</organism>
<comment type="similarity">
    <text evidence="3">Belongs to the TRAFAC class myosin-kinesin ATPase superfamily. Kinesin family. KIN-10 subfamily.</text>
</comment>
<accession>Q6L512</accession>
<reference key="1">
    <citation type="journal article" date="2005" name="Mol. Genet. Genomics">
        <title>A fine physical map of the rice chromosome 5.</title>
        <authorList>
            <person name="Cheng C.-H."/>
            <person name="Chung M.C."/>
            <person name="Liu S.-M."/>
            <person name="Chen S.-K."/>
            <person name="Kao F.Y."/>
            <person name="Lin S.-J."/>
            <person name="Hsiao S.-H."/>
            <person name="Tseng I.C."/>
            <person name="Hsing Y.-I.C."/>
            <person name="Wu H.-P."/>
            <person name="Chen C.-S."/>
            <person name="Shaw J.-F."/>
            <person name="Wu J."/>
            <person name="Matsumoto T."/>
            <person name="Sasaki T."/>
            <person name="Chen H.-C."/>
            <person name="Chow T.-Y."/>
        </authorList>
    </citation>
    <scope>NUCLEOTIDE SEQUENCE [LARGE SCALE GENOMIC DNA]</scope>
    <source>
        <strain>cv. Nipponbare</strain>
    </source>
</reference>
<reference key="2">
    <citation type="journal article" date="2005" name="Nature">
        <title>The map-based sequence of the rice genome.</title>
        <authorList>
            <consortium name="International rice genome sequencing project (IRGSP)"/>
        </authorList>
    </citation>
    <scope>NUCLEOTIDE SEQUENCE [LARGE SCALE GENOMIC DNA]</scope>
    <source>
        <strain>cv. Nipponbare</strain>
    </source>
</reference>
<reference key="3">
    <citation type="journal article" date="2008" name="Nucleic Acids Res.">
        <title>The rice annotation project database (RAP-DB): 2008 update.</title>
        <authorList>
            <consortium name="The rice annotation project (RAP)"/>
        </authorList>
    </citation>
    <scope>GENOME REANNOTATION</scope>
    <source>
        <strain>cv. Nipponbare</strain>
    </source>
</reference>
<reference key="4">
    <citation type="journal article" date="2013" name="Rice">
        <title>Improvement of the Oryza sativa Nipponbare reference genome using next generation sequence and optical map data.</title>
        <authorList>
            <person name="Kawahara Y."/>
            <person name="de la Bastide M."/>
            <person name="Hamilton J.P."/>
            <person name="Kanamori H."/>
            <person name="McCombie W.R."/>
            <person name="Ouyang S."/>
            <person name="Schwartz D.C."/>
            <person name="Tanaka T."/>
            <person name="Wu J."/>
            <person name="Zhou S."/>
            <person name="Childs K.L."/>
            <person name="Davidson R.M."/>
            <person name="Lin H."/>
            <person name="Quesada-Ocampo L."/>
            <person name="Vaillancourt B."/>
            <person name="Sakai H."/>
            <person name="Lee S.S."/>
            <person name="Kim J."/>
            <person name="Numa H."/>
            <person name="Itoh T."/>
            <person name="Buell C.R."/>
            <person name="Matsumoto T."/>
        </authorList>
    </citation>
    <scope>GENOME REANNOTATION</scope>
    <source>
        <strain>cv. Nipponbare</strain>
    </source>
</reference>
<reference key="5">
    <citation type="journal article" date="2005" name="PLoS Biol.">
        <title>The genomes of Oryza sativa: a history of duplications.</title>
        <authorList>
            <person name="Yu J."/>
            <person name="Wang J."/>
            <person name="Lin W."/>
            <person name="Li S."/>
            <person name="Li H."/>
            <person name="Zhou J."/>
            <person name="Ni P."/>
            <person name="Dong W."/>
            <person name="Hu S."/>
            <person name="Zeng C."/>
            <person name="Zhang J."/>
            <person name="Zhang Y."/>
            <person name="Li R."/>
            <person name="Xu Z."/>
            <person name="Li S."/>
            <person name="Li X."/>
            <person name="Zheng H."/>
            <person name="Cong L."/>
            <person name="Lin L."/>
            <person name="Yin J."/>
            <person name="Geng J."/>
            <person name="Li G."/>
            <person name="Shi J."/>
            <person name="Liu J."/>
            <person name="Lv H."/>
            <person name="Li J."/>
            <person name="Wang J."/>
            <person name="Deng Y."/>
            <person name="Ran L."/>
            <person name="Shi X."/>
            <person name="Wang X."/>
            <person name="Wu Q."/>
            <person name="Li C."/>
            <person name="Ren X."/>
            <person name="Wang J."/>
            <person name="Wang X."/>
            <person name="Li D."/>
            <person name="Liu D."/>
            <person name="Zhang X."/>
            <person name="Ji Z."/>
            <person name="Zhao W."/>
            <person name="Sun Y."/>
            <person name="Zhang Z."/>
            <person name="Bao J."/>
            <person name="Han Y."/>
            <person name="Dong L."/>
            <person name="Ji J."/>
            <person name="Chen P."/>
            <person name="Wu S."/>
            <person name="Liu J."/>
            <person name="Xiao Y."/>
            <person name="Bu D."/>
            <person name="Tan J."/>
            <person name="Yang L."/>
            <person name="Ye C."/>
            <person name="Zhang J."/>
            <person name="Xu J."/>
            <person name="Zhou Y."/>
            <person name="Yu Y."/>
            <person name="Zhang B."/>
            <person name="Zhuang S."/>
            <person name="Wei H."/>
            <person name="Liu B."/>
            <person name="Lei M."/>
            <person name="Yu H."/>
            <person name="Li Y."/>
            <person name="Xu H."/>
            <person name="Wei S."/>
            <person name="He X."/>
            <person name="Fang L."/>
            <person name="Zhang Z."/>
            <person name="Zhang Y."/>
            <person name="Huang X."/>
            <person name="Su Z."/>
            <person name="Tong W."/>
            <person name="Li J."/>
            <person name="Tong Z."/>
            <person name="Li S."/>
            <person name="Ye J."/>
            <person name="Wang L."/>
            <person name="Fang L."/>
            <person name="Lei T."/>
            <person name="Chen C.-S."/>
            <person name="Chen H.-C."/>
            <person name="Xu Z."/>
            <person name="Li H."/>
            <person name="Huang H."/>
            <person name="Zhang F."/>
            <person name="Xu H."/>
            <person name="Li N."/>
            <person name="Zhao C."/>
            <person name="Li S."/>
            <person name="Dong L."/>
            <person name="Huang Y."/>
            <person name="Li L."/>
            <person name="Xi Y."/>
            <person name="Qi Q."/>
            <person name="Li W."/>
            <person name="Zhang B."/>
            <person name="Hu W."/>
            <person name="Zhang Y."/>
            <person name="Tian X."/>
            <person name="Jiao Y."/>
            <person name="Liang X."/>
            <person name="Jin J."/>
            <person name="Gao L."/>
            <person name="Zheng W."/>
            <person name="Hao B."/>
            <person name="Liu S.-M."/>
            <person name="Wang W."/>
            <person name="Yuan L."/>
            <person name="Cao M."/>
            <person name="McDermott J."/>
            <person name="Samudrala R."/>
            <person name="Wang J."/>
            <person name="Wong G.K.-S."/>
            <person name="Yang H."/>
        </authorList>
    </citation>
    <scope>NUCLEOTIDE SEQUENCE [LARGE SCALE GENOMIC DNA]</scope>
    <source>
        <strain>cv. Nipponbare</strain>
    </source>
</reference>
<reference key="6">
    <citation type="journal article" date="2003" name="Science">
        <title>Collection, mapping, and annotation of over 28,000 cDNA clones from japonica rice.</title>
        <authorList>
            <consortium name="The rice full-length cDNA consortium"/>
        </authorList>
    </citation>
    <scope>NUCLEOTIDE SEQUENCE [LARGE SCALE MRNA]</scope>
    <source>
        <strain>cv. Nipponbare</strain>
    </source>
</reference>
<reference key="7">
    <citation type="journal article" date="2009" name="Ann. Bot.">
        <title>Evaluating the microtubule cytoskeleton and its interacting proteins in monocots by mining the rice genome.</title>
        <authorList>
            <person name="Guo L."/>
            <person name="Ho C.M."/>
            <person name="Kong Z."/>
            <person name="Lee Y.R."/>
            <person name="Qian Q."/>
            <person name="Liu B."/>
        </authorList>
    </citation>
    <scope>GENE FAMILY</scope>
    <scope>NOMENCLATURE</scope>
</reference>
<dbReference type="EMBL" id="AC117265">
    <property type="protein sequence ID" value="AAT39162.1"/>
    <property type="molecule type" value="Genomic_DNA"/>
</dbReference>
<dbReference type="EMBL" id="AP008211">
    <property type="protein sequence ID" value="BAF17664.1"/>
    <property type="molecule type" value="Genomic_DNA"/>
</dbReference>
<dbReference type="EMBL" id="AP014961">
    <property type="protein sequence ID" value="BAS94394.1"/>
    <property type="molecule type" value="Genomic_DNA"/>
</dbReference>
<dbReference type="EMBL" id="CM000142">
    <property type="protein sequence ID" value="EEE63980.1"/>
    <property type="molecule type" value="Genomic_DNA"/>
</dbReference>
<dbReference type="EMBL" id="AK073413">
    <property type="protein sequence ID" value="BAG93446.1"/>
    <property type="molecule type" value="mRNA"/>
</dbReference>
<dbReference type="RefSeq" id="XP_015638187.1">
    <property type="nucleotide sequence ID" value="XM_015782701.1"/>
</dbReference>
<dbReference type="SMR" id="Q6L512"/>
<dbReference type="FunCoup" id="Q6L512">
    <property type="interactions" value="352"/>
</dbReference>
<dbReference type="STRING" id="39947.Q6L512"/>
<dbReference type="PaxDb" id="39947-Q6L512"/>
<dbReference type="EnsemblPlants" id="Os05t0459400-01">
    <property type="protein sequence ID" value="Os05t0459400-01"/>
    <property type="gene ID" value="Os05g0459400"/>
</dbReference>
<dbReference type="Gramene" id="Os05t0459400-01">
    <property type="protein sequence ID" value="Os05t0459400-01"/>
    <property type="gene ID" value="Os05g0459400"/>
</dbReference>
<dbReference type="KEGG" id="dosa:Os05g0459400"/>
<dbReference type="eggNOG" id="KOG0242">
    <property type="taxonomic scope" value="Eukaryota"/>
</dbReference>
<dbReference type="InParanoid" id="Q6L512"/>
<dbReference type="OMA" id="CYRLDSF"/>
<dbReference type="OrthoDB" id="3176171at2759"/>
<dbReference type="Proteomes" id="UP000000763">
    <property type="component" value="Chromosome 5"/>
</dbReference>
<dbReference type="Proteomes" id="UP000007752">
    <property type="component" value="Chromosome 5"/>
</dbReference>
<dbReference type="Proteomes" id="UP000059680">
    <property type="component" value="Chromosome 5"/>
</dbReference>
<dbReference type="ExpressionAtlas" id="Q6L512">
    <property type="expression patterns" value="baseline and differential"/>
</dbReference>
<dbReference type="GO" id="GO:0005737">
    <property type="term" value="C:cytoplasm"/>
    <property type="evidence" value="ECO:0000318"/>
    <property type="project" value="GO_Central"/>
</dbReference>
<dbReference type="GO" id="GO:0005871">
    <property type="term" value="C:kinesin complex"/>
    <property type="evidence" value="ECO:0000318"/>
    <property type="project" value="GO_Central"/>
</dbReference>
<dbReference type="GO" id="GO:0005874">
    <property type="term" value="C:microtubule"/>
    <property type="evidence" value="ECO:0000318"/>
    <property type="project" value="GO_Central"/>
</dbReference>
<dbReference type="GO" id="GO:0005524">
    <property type="term" value="F:ATP binding"/>
    <property type="evidence" value="ECO:0007669"/>
    <property type="project" value="UniProtKB-KW"/>
</dbReference>
<dbReference type="GO" id="GO:0016887">
    <property type="term" value="F:ATP hydrolysis activity"/>
    <property type="evidence" value="ECO:0000318"/>
    <property type="project" value="GO_Central"/>
</dbReference>
<dbReference type="GO" id="GO:0008017">
    <property type="term" value="F:microtubule binding"/>
    <property type="evidence" value="ECO:0000318"/>
    <property type="project" value="GO_Central"/>
</dbReference>
<dbReference type="GO" id="GO:0003777">
    <property type="term" value="F:microtubule motor activity"/>
    <property type="evidence" value="ECO:0000318"/>
    <property type="project" value="GO_Central"/>
</dbReference>
<dbReference type="GO" id="GO:0007018">
    <property type="term" value="P:microtubule-based movement"/>
    <property type="evidence" value="ECO:0000318"/>
    <property type="project" value="GO_Central"/>
</dbReference>
<dbReference type="FunFam" id="3.40.850.10:FF:000087">
    <property type="entry name" value="Kinesin-like protein"/>
    <property type="match status" value="1"/>
</dbReference>
<dbReference type="FunFam" id="1.10.150.280:FF:000003">
    <property type="entry name" value="Kinesin-like protein KIN-10C"/>
    <property type="match status" value="1"/>
</dbReference>
<dbReference type="Gene3D" id="1.10.150.280">
    <property type="entry name" value="AF1531-like domain"/>
    <property type="match status" value="1"/>
</dbReference>
<dbReference type="Gene3D" id="3.40.850.10">
    <property type="entry name" value="Kinesin motor domain"/>
    <property type="match status" value="1"/>
</dbReference>
<dbReference type="InterPro" id="IPR027640">
    <property type="entry name" value="Kinesin-like_fam"/>
</dbReference>
<dbReference type="InterPro" id="IPR019821">
    <property type="entry name" value="Kinesin_motor_CS"/>
</dbReference>
<dbReference type="InterPro" id="IPR001752">
    <property type="entry name" value="Kinesin_motor_dom"/>
</dbReference>
<dbReference type="InterPro" id="IPR036961">
    <property type="entry name" value="Kinesin_motor_dom_sf"/>
</dbReference>
<dbReference type="InterPro" id="IPR027417">
    <property type="entry name" value="P-loop_NTPase"/>
</dbReference>
<dbReference type="InterPro" id="IPR010994">
    <property type="entry name" value="RuvA_2-like"/>
</dbReference>
<dbReference type="PANTHER" id="PTHR47969">
    <property type="entry name" value="CHROMOSOME-ASSOCIATED KINESIN KIF4A-RELATED"/>
    <property type="match status" value="1"/>
</dbReference>
<dbReference type="PANTHER" id="PTHR47969:SF9">
    <property type="entry name" value="KINESIN-LIKE PROTEIN"/>
    <property type="match status" value="1"/>
</dbReference>
<dbReference type="Pfam" id="PF12836">
    <property type="entry name" value="HHH_3"/>
    <property type="match status" value="1"/>
</dbReference>
<dbReference type="Pfam" id="PF00225">
    <property type="entry name" value="Kinesin"/>
    <property type="match status" value="1"/>
</dbReference>
<dbReference type="PRINTS" id="PR00380">
    <property type="entry name" value="KINESINHEAVY"/>
</dbReference>
<dbReference type="SMART" id="SM00129">
    <property type="entry name" value="KISc"/>
    <property type="match status" value="1"/>
</dbReference>
<dbReference type="SUPFAM" id="SSF52540">
    <property type="entry name" value="P-loop containing nucleoside triphosphate hydrolases"/>
    <property type="match status" value="1"/>
</dbReference>
<dbReference type="SUPFAM" id="SSF47781">
    <property type="entry name" value="RuvA domain 2-like"/>
    <property type="match status" value="1"/>
</dbReference>
<dbReference type="PROSITE" id="PS00411">
    <property type="entry name" value="KINESIN_MOTOR_1"/>
    <property type="match status" value="1"/>
</dbReference>
<dbReference type="PROSITE" id="PS50067">
    <property type="entry name" value="KINESIN_MOTOR_2"/>
    <property type="match status" value="1"/>
</dbReference>
<name>KN10C_ORYSJ</name>
<proteinExistence type="evidence at transcript level"/>
<evidence type="ECO:0000255" key="1">
    <source>
        <dbReference type="PROSITE-ProRule" id="PRU00283"/>
    </source>
</evidence>
<evidence type="ECO:0000256" key="2">
    <source>
        <dbReference type="SAM" id="MobiDB-lite"/>
    </source>
</evidence>
<evidence type="ECO:0000303" key="3">
    <source>
    </source>
</evidence>
<evidence type="ECO:0000305" key="4"/>
<evidence type="ECO:0000312" key="5">
    <source>
        <dbReference type="EMBL" id="AAT39162.1"/>
    </source>
</evidence>
<evidence type="ECO:0000312" key="6">
    <source>
        <dbReference type="EMBL" id="BAS94394.1"/>
    </source>
</evidence>
<evidence type="ECO:0000312" key="7">
    <source>
        <dbReference type="EMBL" id="EEE63980.1"/>
    </source>
</evidence>
<feature type="chain" id="PRO_0000437037" description="Kinesin-like protein KIN-10C">
    <location>
        <begin position="1"/>
        <end position="584"/>
    </location>
</feature>
<feature type="domain" description="Kinesin motor" evidence="1">
    <location>
        <begin position="11"/>
        <end position="324"/>
    </location>
</feature>
<feature type="region of interest" description="Disordered" evidence="2">
    <location>
        <begin position="377"/>
        <end position="398"/>
    </location>
</feature>
<feature type="region of interest" description="Disordered" evidence="2">
    <location>
        <begin position="445"/>
        <end position="469"/>
    </location>
</feature>
<feature type="binding site" evidence="1">
    <location>
        <begin position="99"/>
        <end position="106"/>
    </location>
    <ligand>
        <name>ATP</name>
        <dbReference type="ChEBI" id="CHEBI:30616"/>
    </ligand>
</feature>
<gene>
    <name evidence="4" type="primary">KIN10C</name>
    <name evidence="6" type="ordered locus">Os05g0459400</name>
    <name evidence="4" type="ordered locus">LOC_Os05g38480</name>
    <name evidence="5" type="ORF">OJ1281_H05.2</name>
    <name evidence="7" type="ORF">OsJ_18806</name>
</gene>